<organism>
    <name type="scientific">Stutzerimonas stutzeri (strain A1501)</name>
    <name type="common">Pseudomonas stutzeri</name>
    <dbReference type="NCBI Taxonomy" id="379731"/>
    <lineage>
        <taxon>Bacteria</taxon>
        <taxon>Pseudomonadati</taxon>
        <taxon>Pseudomonadota</taxon>
        <taxon>Gammaproteobacteria</taxon>
        <taxon>Pseudomonadales</taxon>
        <taxon>Pseudomonadaceae</taxon>
        <taxon>Stutzerimonas</taxon>
    </lineage>
</organism>
<comment type="function">
    <text evidence="1">Catalyzes the NADPH-dependent reduction of glutamyl-tRNA(Glu) to glutamate 1-semialdehyde (GSA).</text>
</comment>
<comment type="catalytic activity">
    <reaction evidence="1">
        <text>(S)-4-amino-5-oxopentanoate + tRNA(Glu) + NADP(+) = L-glutamyl-tRNA(Glu) + NADPH + H(+)</text>
        <dbReference type="Rhea" id="RHEA:12344"/>
        <dbReference type="Rhea" id="RHEA-COMP:9663"/>
        <dbReference type="Rhea" id="RHEA-COMP:9680"/>
        <dbReference type="ChEBI" id="CHEBI:15378"/>
        <dbReference type="ChEBI" id="CHEBI:57501"/>
        <dbReference type="ChEBI" id="CHEBI:57783"/>
        <dbReference type="ChEBI" id="CHEBI:58349"/>
        <dbReference type="ChEBI" id="CHEBI:78442"/>
        <dbReference type="ChEBI" id="CHEBI:78520"/>
        <dbReference type="EC" id="1.2.1.70"/>
    </reaction>
</comment>
<comment type="pathway">
    <text evidence="1">Porphyrin-containing compound metabolism; protoporphyrin-IX biosynthesis; 5-aminolevulinate from L-glutamyl-tRNA(Glu): step 1/2.</text>
</comment>
<comment type="subunit">
    <text evidence="1">Homodimer.</text>
</comment>
<comment type="domain">
    <text evidence="1">Possesses an unusual extended V-shaped dimeric structure with each monomer consisting of three distinct domains arranged along a curved 'spinal' alpha-helix. The N-terminal catalytic domain specifically recognizes the glutamate moiety of the substrate. The second domain is the NADPH-binding domain, and the third C-terminal domain is responsible for dimerization.</text>
</comment>
<comment type="miscellaneous">
    <text evidence="1">During catalysis, the active site Cys acts as a nucleophile attacking the alpha-carbonyl group of tRNA-bound glutamate with the formation of a thioester intermediate between enzyme and glutamate, and the concomitant release of tRNA(Glu). The thioester intermediate is finally reduced by direct hydride transfer from NADPH, to form the product GSA.</text>
</comment>
<comment type="similarity">
    <text evidence="1">Belongs to the glutamyl-tRNA reductase family.</text>
</comment>
<protein>
    <recommendedName>
        <fullName evidence="1">Glutamyl-tRNA reductase</fullName>
        <shortName evidence="1">GluTR</shortName>
        <ecNumber evidence="1">1.2.1.70</ecNumber>
    </recommendedName>
</protein>
<sequence>MAFLALGINHKTASVDVRERVAFTPDQMVEALRQLCRVTPTREAAILSTCNRSELYLQQDEVEAEAVLAWLASYHRLSLDELKACAYVHVDDQAVRHMMRVASGLDSLVLGEPQILGQMKSAYAVAREAGSVGPLLGRLFQATFSTAKTVRTDTAIGENPVSVAFAAVSLARQIFSNLQRSQALLIGAGETITLVARHLHEQGVKRIVVANRTLERASALAAELGAHAILLADIPDELHNSDIVISSTASQLPILGKGAVEQALKRRKHKPMFMVDIAVPRDIESQVGELDDVYLYTVDDLHEVVAENLKSRQGAAQAAEELVAAGTEDFMQRLRELAAVDVLKAYRQHAERIRDDELSKAQRLLANGASAEDALAQLARGLTNKLLHAPSVQLKKLSAEGRVEALSMAQELFALHEGTEKP</sequence>
<name>HEM1_STUS1</name>
<feature type="chain" id="PRO_1000004675" description="Glutamyl-tRNA reductase">
    <location>
        <begin position="1"/>
        <end position="422"/>
    </location>
</feature>
<feature type="active site" description="Nucleophile" evidence="1">
    <location>
        <position position="50"/>
    </location>
</feature>
<feature type="binding site" evidence="1">
    <location>
        <begin position="49"/>
        <end position="52"/>
    </location>
    <ligand>
        <name>substrate</name>
    </ligand>
</feature>
<feature type="binding site" evidence="1">
    <location>
        <position position="107"/>
    </location>
    <ligand>
        <name>substrate</name>
    </ligand>
</feature>
<feature type="binding site" evidence="1">
    <location>
        <begin position="112"/>
        <end position="114"/>
    </location>
    <ligand>
        <name>substrate</name>
    </ligand>
</feature>
<feature type="binding site" evidence="1">
    <location>
        <position position="118"/>
    </location>
    <ligand>
        <name>substrate</name>
    </ligand>
</feature>
<feature type="binding site" evidence="1">
    <location>
        <begin position="187"/>
        <end position="192"/>
    </location>
    <ligand>
        <name>NADP(+)</name>
        <dbReference type="ChEBI" id="CHEBI:58349"/>
    </ligand>
</feature>
<feature type="site" description="Important for activity" evidence="1">
    <location>
        <position position="97"/>
    </location>
</feature>
<keyword id="KW-0521">NADP</keyword>
<keyword id="KW-0560">Oxidoreductase</keyword>
<keyword id="KW-0627">Porphyrin biosynthesis</keyword>
<keyword id="KW-1185">Reference proteome</keyword>
<proteinExistence type="inferred from homology"/>
<dbReference type="EC" id="1.2.1.70" evidence="1"/>
<dbReference type="EMBL" id="CP000304">
    <property type="protein sequence ID" value="ABP80821.1"/>
    <property type="molecule type" value="Genomic_DNA"/>
</dbReference>
<dbReference type="RefSeq" id="WP_011914266.1">
    <property type="nucleotide sequence ID" value="NC_009434.1"/>
</dbReference>
<dbReference type="SMR" id="A4VPC0"/>
<dbReference type="KEGG" id="psa:PST_3183"/>
<dbReference type="eggNOG" id="COG0373">
    <property type="taxonomic scope" value="Bacteria"/>
</dbReference>
<dbReference type="HOGENOM" id="CLU_035113_2_2_6"/>
<dbReference type="UniPathway" id="UPA00251">
    <property type="reaction ID" value="UER00316"/>
</dbReference>
<dbReference type="Proteomes" id="UP000000233">
    <property type="component" value="Chromosome"/>
</dbReference>
<dbReference type="GO" id="GO:0008883">
    <property type="term" value="F:glutamyl-tRNA reductase activity"/>
    <property type="evidence" value="ECO:0007669"/>
    <property type="project" value="UniProtKB-UniRule"/>
</dbReference>
<dbReference type="GO" id="GO:0050661">
    <property type="term" value="F:NADP binding"/>
    <property type="evidence" value="ECO:0007669"/>
    <property type="project" value="InterPro"/>
</dbReference>
<dbReference type="GO" id="GO:0019353">
    <property type="term" value="P:protoporphyrinogen IX biosynthetic process from glutamate"/>
    <property type="evidence" value="ECO:0007669"/>
    <property type="project" value="TreeGrafter"/>
</dbReference>
<dbReference type="CDD" id="cd05213">
    <property type="entry name" value="NAD_bind_Glutamyl_tRNA_reduct"/>
    <property type="match status" value="1"/>
</dbReference>
<dbReference type="FunFam" id="3.30.460.30:FF:000001">
    <property type="entry name" value="Glutamyl-tRNA reductase"/>
    <property type="match status" value="1"/>
</dbReference>
<dbReference type="FunFam" id="3.40.50.720:FF:000031">
    <property type="entry name" value="Glutamyl-tRNA reductase"/>
    <property type="match status" value="1"/>
</dbReference>
<dbReference type="Gene3D" id="3.30.460.30">
    <property type="entry name" value="Glutamyl-tRNA reductase, N-terminal domain"/>
    <property type="match status" value="1"/>
</dbReference>
<dbReference type="Gene3D" id="3.40.50.720">
    <property type="entry name" value="NAD(P)-binding Rossmann-like Domain"/>
    <property type="match status" value="1"/>
</dbReference>
<dbReference type="HAMAP" id="MF_00087">
    <property type="entry name" value="Glu_tRNA_reductase"/>
    <property type="match status" value="1"/>
</dbReference>
<dbReference type="InterPro" id="IPR000343">
    <property type="entry name" value="4pyrrol_synth_GluRdtase"/>
</dbReference>
<dbReference type="InterPro" id="IPR015896">
    <property type="entry name" value="4pyrrol_synth_GluRdtase_dimer"/>
</dbReference>
<dbReference type="InterPro" id="IPR015895">
    <property type="entry name" value="4pyrrol_synth_GluRdtase_N"/>
</dbReference>
<dbReference type="InterPro" id="IPR018214">
    <property type="entry name" value="GluRdtase_CS"/>
</dbReference>
<dbReference type="InterPro" id="IPR036453">
    <property type="entry name" value="GluRdtase_dimer_dom_sf"/>
</dbReference>
<dbReference type="InterPro" id="IPR036343">
    <property type="entry name" value="GluRdtase_N_sf"/>
</dbReference>
<dbReference type="InterPro" id="IPR036291">
    <property type="entry name" value="NAD(P)-bd_dom_sf"/>
</dbReference>
<dbReference type="InterPro" id="IPR006151">
    <property type="entry name" value="Shikm_DH/Glu-tRNA_Rdtase"/>
</dbReference>
<dbReference type="NCBIfam" id="TIGR01035">
    <property type="entry name" value="hemA"/>
    <property type="match status" value="1"/>
</dbReference>
<dbReference type="PANTHER" id="PTHR43013">
    <property type="entry name" value="GLUTAMYL-TRNA REDUCTASE"/>
    <property type="match status" value="1"/>
</dbReference>
<dbReference type="PANTHER" id="PTHR43013:SF1">
    <property type="entry name" value="GLUTAMYL-TRNA REDUCTASE"/>
    <property type="match status" value="1"/>
</dbReference>
<dbReference type="Pfam" id="PF00745">
    <property type="entry name" value="GlutR_dimer"/>
    <property type="match status" value="1"/>
</dbReference>
<dbReference type="Pfam" id="PF05201">
    <property type="entry name" value="GlutR_N"/>
    <property type="match status" value="1"/>
</dbReference>
<dbReference type="Pfam" id="PF01488">
    <property type="entry name" value="Shikimate_DH"/>
    <property type="match status" value="1"/>
</dbReference>
<dbReference type="PIRSF" id="PIRSF000445">
    <property type="entry name" value="4pyrrol_synth_GluRdtase"/>
    <property type="match status" value="1"/>
</dbReference>
<dbReference type="SUPFAM" id="SSF69742">
    <property type="entry name" value="Glutamyl tRNA-reductase catalytic, N-terminal domain"/>
    <property type="match status" value="1"/>
</dbReference>
<dbReference type="SUPFAM" id="SSF69075">
    <property type="entry name" value="Glutamyl tRNA-reductase dimerization domain"/>
    <property type="match status" value="1"/>
</dbReference>
<dbReference type="SUPFAM" id="SSF51735">
    <property type="entry name" value="NAD(P)-binding Rossmann-fold domains"/>
    <property type="match status" value="1"/>
</dbReference>
<dbReference type="PROSITE" id="PS00747">
    <property type="entry name" value="GLUTR"/>
    <property type="match status" value="1"/>
</dbReference>
<accession>A4VPC0</accession>
<reference key="1">
    <citation type="journal article" date="2008" name="Proc. Natl. Acad. Sci. U.S.A.">
        <title>Nitrogen fixation island and rhizosphere competence traits in the genome of root-associated Pseudomonas stutzeri A1501.</title>
        <authorList>
            <person name="Yan Y."/>
            <person name="Yang J."/>
            <person name="Dou Y."/>
            <person name="Chen M."/>
            <person name="Ping S."/>
            <person name="Peng J."/>
            <person name="Lu W."/>
            <person name="Zhang W."/>
            <person name="Yao Z."/>
            <person name="Li H."/>
            <person name="Liu W."/>
            <person name="He S."/>
            <person name="Geng L."/>
            <person name="Zhang X."/>
            <person name="Yang F."/>
            <person name="Yu H."/>
            <person name="Zhan Y."/>
            <person name="Li D."/>
            <person name="Lin Z."/>
            <person name="Wang Y."/>
            <person name="Elmerich C."/>
            <person name="Lin M."/>
            <person name="Jin Q."/>
        </authorList>
    </citation>
    <scope>NUCLEOTIDE SEQUENCE [LARGE SCALE GENOMIC DNA]</scope>
    <source>
        <strain>A1501</strain>
    </source>
</reference>
<gene>
    <name evidence="1" type="primary">hemA</name>
    <name type="ordered locus">PST_3183</name>
</gene>
<evidence type="ECO:0000255" key="1">
    <source>
        <dbReference type="HAMAP-Rule" id="MF_00087"/>
    </source>
</evidence>